<keyword id="KW-0007">Acetylation</keyword>
<keyword id="KW-0029">Amino-acid transport</keyword>
<keyword id="KW-0472">Membrane</keyword>
<keyword id="KW-0496">Mitochondrion</keyword>
<keyword id="KW-0999">Mitochondrion inner membrane</keyword>
<keyword id="KW-1000">Mitochondrion outer membrane</keyword>
<keyword id="KW-1267">Proteomics identification</keyword>
<keyword id="KW-1185">Reference proteome</keyword>
<keyword id="KW-0812">Transmembrane</keyword>
<keyword id="KW-1133">Transmembrane helix</keyword>
<keyword id="KW-0813">Transport</keyword>
<organism>
    <name type="scientific">Homo sapiens</name>
    <name type="common">Human</name>
    <dbReference type="NCBI Taxonomy" id="9606"/>
    <lineage>
        <taxon>Eukaryota</taxon>
        <taxon>Metazoa</taxon>
        <taxon>Chordata</taxon>
        <taxon>Craniata</taxon>
        <taxon>Vertebrata</taxon>
        <taxon>Euteleostomi</taxon>
        <taxon>Mammalia</taxon>
        <taxon>Eutheria</taxon>
        <taxon>Euarchontoglires</taxon>
        <taxon>Primates</taxon>
        <taxon>Haplorrhini</taxon>
        <taxon>Catarrhini</taxon>
        <taxon>Hominidae</taxon>
        <taxon>Homo</taxon>
    </lineage>
</organism>
<sequence>MEADLSGFNIDAPRWDQRTFLGRVKHFLNITDPRTVFVSERELDWAKVMVEKSRMGVVPPGTQVEQLLYAKKLYDSAFHPDTGEKMNVIGRMSFQLPGGMIITGFMLQFYRTMPAVIFWQWVNQSFNALVNYTNRNAASPTSVRQMALSYFTATTTAVATAVGMNMLTKKAPPLVGRWVPFAAVAAANCVNIPMMRQQELIKGICVKDRNENEIGHSRRAAAIGITQVVISRITMSAPGMILLPVIMERLEKLHFMQKVKVLHAPLQVMLSGCFLIFMVPVACGLFPQKCELPVSYLEPKLQDTIKAKYGELEPYVYFNKGL</sequence>
<gene>
    <name evidence="5 8" type="primary">SFXN2</name>
</gene>
<protein>
    <recommendedName>
        <fullName evidence="5">Sideroflexin-2</fullName>
    </recommendedName>
</protein>
<comment type="function">
    <text evidence="3 4">Mitochondrial amino-acid transporter that mediates transport of serine into mitochondria (PubMed:30442778). Involved in mitochondrial iron homeostasis by regulating heme biosynthesis (PubMed:30570704).</text>
</comment>
<comment type="catalytic activity">
    <reaction evidence="7">
        <text>L-serine(in) = L-serine(out)</text>
        <dbReference type="Rhea" id="RHEA:35031"/>
        <dbReference type="ChEBI" id="CHEBI:33384"/>
    </reaction>
</comment>
<comment type="interaction">
    <interactant intactId="EBI-6381136">
        <id>Q96NB2</id>
    </interactant>
    <interactant intactId="EBI-13059134">
        <id>Q13520</id>
        <label>AQP6</label>
    </interactant>
    <organismsDiffer>false</organismsDiffer>
    <experiments>3</experiments>
</comment>
<comment type="interaction">
    <interactant intactId="EBI-6381136">
        <id>Q96NB2</id>
    </interactant>
    <interactant intactId="EBI-18053395">
        <id>Q7Z5P4</id>
        <label>HSD17B13</label>
    </interactant>
    <organismsDiffer>false</organismsDiffer>
    <experiments>3</experiments>
</comment>
<comment type="interaction">
    <interactant intactId="EBI-6381136">
        <id>Q96NB2</id>
    </interactant>
    <interactant intactId="EBI-716063">
        <id>Q13113</id>
        <label>PDZK1IP1</label>
    </interactant>
    <organismsDiffer>false</organismsDiffer>
    <experiments>3</experiments>
</comment>
<comment type="interaction">
    <interactant intactId="EBI-6381136">
        <id>Q96NB2</id>
    </interactant>
    <interactant intactId="EBI-7545592">
        <id>Q9H6H4</id>
        <label>REEP4</label>
    </interactant>
    <organismsDiffer>false</organismsDiffer>
    <experiments>3</experiments>
</comment>
<comment type="interaction">
    <interactant intactId="EBI-6381136">
        <id>Q96NB2</id>
    </interactant>
    <interactant intactId="EBI-8638294">
        <id>Q9NUH8</id>
        <label>TMEM14B</label>
    </interactant>
    <organismsDiffer>false</organismsDiffer>
    <experiments>3</experiments>
</comment>
<comment type="subcellular location">
    <subcellularLocation>
        <location evidence="3">Mitochondrion inner membrane</location>
        <topology evidence="1">Multi-pass membrane protein</topology>
    </subcellularLocation>
    <subcellularLocation>
        <location evidence="4">Mitochondrion outer membrane</location>
        <topology evidence="1">Multi-pass membrane protein</topology>
    </subcellularLocation>
</comment>
<comment type="tissue specificity">
    <text evidence="2">Widely expressed, highest levels in kidney, liver, and pancreas.</text>
</comment>
<comment type="similarity">
    <text evidence="6">Belongs to the sideroflexin family.</text>
</comment>
<comment type="sequence caution" evidence="6">
    <conflict type="erroneous initiation">
        <sequence resource="EMBL-CDS" id="BAB70993"/>
    </conflict>
</comment>
<dbReference type="EMBL" id="AF462052">
    <property type="protein sequence ID" value="AAM09645.1"/>
    <property type="molecule type" value="mRNA"/>
</dbReference>
<dbReference type="EMBL" id="CH471066">
    <property type="protein sequence ID" value="EAW49675.1"/>
    <property type="molecule type" value="Genomic_DNA"/>
</dbReference>
<dbReference type="EMBL" id="CH471066">
    <property type="protein sequence ID" value="EAW49677.1"/>
    <property type="molecule type" value="Genomic_DNA"/>
</dbReference>
<dbReference type="EMBL" id="BC022091">
    <property type="protein sequence ID" value="AAH22091.1"/>
    <property type="molecule type" value="mRNA"/>
</dbReference>
<dbReference type="EMBL" id="AK055711">
    <property type="protein sequence ID" value="BAB70993.1"/>
    <property type="status" value="ALT_INIT"/>
    <property type="molecule type" value="mRNA"/>
</dbReference>
<dbReference type="CCDS" id="CCDS7539.1"/>
<dbReference type="RefSeq" id="NP_001337918.1">
    <property type="nucleotide sequence ID" value="NM_001350989.2"/>
</dbReference>
<dbReference type="RefSeq" id="NP_849189.1">
    <property type="nucleotide sequence ID" value="NM_178858.6"/>
</dbReference>
<dbReference type="RefSeq" id="XP_011537564.1">
    <property type="nucleotide sequence ID" value="XM_011539262.2"/>
</dbReference>
<dbReference type="RefSeq" id="XP_016871152.1">
    <property type="nucleotide sequence ID" value="XM_017015663.1"/>
</dbReference>
<dbReference type="RefSeq" id="XP_047280527.1">
    <property type="nucleotide sequence ID" value="XM_047424571.1"/>
</dbReference>
<dbReference type="RefSeq" id="XP_054220709.1">
    <property type="nucleotide sequence ID" value="XM_054364734.1"/>
</dbReference>
<dbReference type="BioGRID" id="125630">
    <property type="interactions" value="123"/>
</dbReference>
<dbReference type="FunCoup" id="Q96NB2">
    <property type="interactions" value="673"/>
</dbReference>
<dbReference type="IntAct" id="Q96NB2">
    <property type="interactions" value="53"/>
</dbReference>
<dbReference type="STRING" id="9606.ENSP00000358909"/>
<dbReference type="TCDB" id="2.A.54.1.8">
    <property type="family name" value="the sideroflexin (sfxn) family (formerly the mitochondrial tricarboxylate carrier (mtc) family)"/>
</dbReference>
<dbReference type="GlyGen" id="Q96NB2">
    <property type="glycosylation" value="1 site, 1 N-linked glycan (1 site)"/>
</dbReference>
<dbReference type="iPTMnet" id="Q96NB2"/>
<dbReference type="PhosphoSitePlus" id="Q96NB2"/>
<dbReference type="SwissPalm" id="Q96NB2"/>
<dbReference type="BioMuta" id="SFXN2"/>
<dbReference type="jPOST" id="Q96NB2"/>
<dbReference type="MassIVE" id="Q96NB2"/>
<dbReference type="PaxDb" id="9606-ENSP00000358909"/>
<dbReference type="PeptideAtlas" id="Q96NB2"/>
<dbReference type="ProteomicsDB" id="77498"/>
<dbReference type="Pumba" id="Q96NB2"/>
<dbReference type="Antibodypedia" id="18077">
    <property type="antibodies" value="74 antibodies from 18 providers"/>
</dbReference>
<dbReference type="DNASU" id="118980"/>
<dbReference type="Ensembl" id="ENST00000369893.10">
    <property type="protein sequence ID" value="ENSP00000358909.4"/>
    <property type="gene ID" value="ENSG00000156398.13"/>
</dbReference>
<dbReference type="GeneID" id="118980"/>
<dbReference type="KEGG" id="hsa:118980"/>
<dbReference type="MANE-Select" id="ENST00000369893.10">
    <property type="protein sequence ID" value="ENSP00000358909.4"/>
    <property type="RefSeq nucleotide sequence ID" value="NM_178858.6"/>
    <property type="RefSeq protein sequence ID" value="NP_849189.1"/>
</dbReference>
<dbReference type="UCSC" id="uc001kwb.3">
    <property type="organism name" value="human"/>
</dbReference>
<dbReference type="AGR" id="HGNC:16086"/>
<dbReference type="CTD" id="118980"/>
<dbReference type="DisGeNET" id="118980"/>
<dbReference type="GeneCards" id="SFXN2"/>
<dbReference type="HGNC" id="HGNC:16086">
    <property type="gene designation" value="SFXN2"/>
</dbReference>
<dbReference type="HPA" id="ENSG00000156398">
    <property type="expression patterns" value="Tissue enhanced (kidney, parathyroid gland)"/>
</dbReference>
<dbReference type="MIM" id="615570">
    <property type="type" value="gene"/>
</dbReference>
<dbReference type="neXtProt" id="NX_Q96NB2"/>
<dbReference type="OpenTargets" id="ENSG00000156398"/>
<dbReference type="PharmGKB" id="PA38091"/>
<dbReference type="VEuPathDB" id="HostDB:ENSG00000156398"/>
<dbReference type="eggNOG" id="KOG3767">
    <property type="taxonomic scope" value="Eukaryota"/>
</dbReference>
<dbReference type="GeneTree" id="ENSGT01030000234641"/>
<dbReference type="HOGENOM" id="CLU_039425_1_0_1"/>
<dbReference type="InParanoid" id="Q96NB2"/>
<dbReference type="OMA" id="LQRYVPF"/>
<dbReference type="OrthoDB" id="6608471at2759"/>
<dbReference type="PAN-GO" id="Q96NB2">
    <property type="GO annotations" value="3 GO annotations based on evolutionary models"/>
</dbReference>
<dbReference type="PhylomeDB" id="Q96NB2"/>
<dbReference type="TreeFam" id="TF313205"/>
<dbReference type="PathwayCommons" id="Q96NB2"/>
<dbReference type="SignaLink" id="Q96NB2"/>
<dbReference type="BioGRID-ORCS" id="118980">
    <property type="hits" value="11 hits in 1160 CRISPR screens"/>
</dbReference>
<dbReference type="ChiTaRS" id="SFXN2">
    <property type="organism name" value="human"/>
</dbReference>
<dbReference type="GenomeRNAi" id="118980"/>
<dbReference type="Pharos" id="Q96NB2">
    <property type="development level" value="Tdark"/>
</dbReference>
<dbReference type="PRO" id="PR:Q96NB2"/>
<dbReference type="Proteomes" id="UP000005640">
    <property type="component" value="Chromosome 10"/>
</dbReference>
<dbReference type="RNAct" id="Q96NB2">
    <property type="molecule type" value="protein"/>
</dbReference>
<dbReference type="Bgee" id="ENSG00000156398">
    <property type="expression patterns" value="Expressed in kidney epithelium and 171 other cell types or tissues"/>
</dbReference>
<dbReference type="ExpressionAtlas" id="Q96NB2">
    <property type="expression patterns" value="baseline and differential"/>
</dbReference>
<dbReference type="GO" id="GO:0005743">
    <property type="term" value="C:mitochondrial inner membrane"/>
    <property type="evidence" value="ECO:0000318"/>
    <property type="project" value="GO_Central"/>
</dbReference>
<dbReference type="GO" id="GO:0005741">
    <property type="term" value="C:mitochondrial outer membrane"/>
    <property type="evidence" value="ECO:0000314"/>
    <property type="project" value="UniProtKB"/>
</dbReference>
<dbReference type="GO" id="GO:0005739">
    <property type="term" value="C:mitochondrion"/>
    <property type="evidence" value="ECO:0000314"/>
    <property type="project" value="UniProtKB"/>
</dbReference>
<dbReference type="GO" id="GO:0015075">
    <property type="term" value="F:monoatomic ion transmembrane transporter activity"/>
    <property type="evidence" value="ECO:0007669"/>
    <property type="project" value="InterPro"/>
</dbReference>
<dbReference type="GO" id="GO:0022857">
    <property type="term" value="F:transmembrane transporter activity"/>
    <property type="evidence" value="ECO:0000318"/>
    <property type="project" value="GO_Central"/>
</dbReference>
<dbReference type="GO" id="GO:1990542">
    <property type="term" value="P:mitochondrial transmembrane transport"/>
    <property type="evidence" value="ECO:0000314"/>
    <property type="project" value="UniProtKB"/>
</dbReference>
<dbReference type="GO" id="GO:0140300">
    <property type="term" value="P:serine import into mitochondrion"/>
    <property type="evidence" value="ECO:0000318"/>
    <property type="project" value="GO_Central"/>
</dbReference>
<dbReference type="InterPro" id="IPR004686">
    <property type="entry name" value="Mtc"/>
</dbReference>
<dbReference type="NCBIfam" id="TIGR00798">
    <property type="entry name" value="mtc"/>
    <property type="match status" value="1"/>
</dbReference>
<dbReference type="PANTHER" id="PTHR11153">
    <property type="entry name" value="SIDEROFLEXIN"/>
    <property type="match status" value="1"/>
</dbReference>
<dbReference type="PANTHER" id="PTHR11153:SF14">
    <property type="entry name" value="SIDEROFLEXIN-2"/>
    <property type="match status" value="1"/>
</dbReference>
<dbReference type="Pfam" id="PF03820">
    <property type="entry name" value="SFXNs"/>
    <property type="match status" value="1"/>
</dbReference>
<feature type="chain" id="PRO_0000177035" description="Sideroflexin-2">
    <location>
        <begin position="1"/>
        <end position="322"/>
    </location>
</feature>
<feature type="transmembrane region" description="Helical" evidence="1">
    <location>
        <begin position="100"/>
        <end position="122"/>
    </location>
</feature>
<feature type="transmembrane region" description="Helical" evidence="1">
    <location>
        <begin position="142"/>
        <end position="164"/>
    </location>
</feature>
<feature type="transmembrane region" description="Helical" evidence="1">
    <location>
        <begin position="174"/>
        <end position="192"/>
    </location>
</feature>
<feature type="transmembrane region" description="Helical" evidence="1">
    <location>
        <begin position="228"/>
        <end position="250"/>
    </location>
</feature>
<feature type="transmembrane region" description="Helical" evidence="1">
    <location>
        <begin position="265"/>
        <end position="287"/>
    </location>
</feature>
<feature type="modified residue" description="N-acetylmethionine" evidence="9">
    <location>
        <position position="1"/>
    </location>
</feature>
<feature type="sequence conflict" description="In Ref. 4; BAB70993." evidence="6" ref="4">
    <original>QMALSYFTATTTAVATAVGMNMLTKKAPPLVGRWVPFAAVAAANCVNIPMMRQQELIKGI</original>
    <variation>KRRPWWAAGCPLPLWLRLTVSISP</variation>
    <location>
        <begin position="145"/>
        <end position="204"/>
    </location>
</feature>
<evidence type="ECO:0000255" key="1"/>
<evidence type="ECO:0000269" key="2">
    <source>
    </source>
</evidence>
<evidence type="ECO:0000269" key="3">
    <source>
    </source>
</evidence>
<evidence type="ECO:0000269" key="4">
    <source>
    </source>
</evidence>
<evidence type="ECO:0000303" key="5">
    <source ref="2"/>
</evidence>
<evidence type="ECO:0000305" key="6"/>
<evidence type="ECO:0000305" key="7">
    <source>
    </source>
</evidence>
<evidence type="ECO:0000312" key="8">
    <source>
        <dbReference type="HGNC" id="HGNC:16086"/>
    </source>
</evidence>
<evidence type="ECO:0007744" key="9">
    <source>
    </source>
</evidence>
<reference key="1">
    <citation type="journal article" date="2003" name="Biochem. Genet.">
        <title>Isolation and characterization of a novel human putative anemia-related gene homologous to mouse sideroflexin.</title>
        <authorList>
            <person name="Ye X."/>
            <person name="Xu J."/>
            <person name="Cheng C."/>
            <person name="Yin G."/>
            <person name="Zeng L."/>
            <person name="Ji C."/>
            <person name="Gu S."/>
            <person name="Xie Y."/>
            <person name="Mao Y."/>
        </authorList>
    </citation>
    <scope>NUCLEOTIDE SEQUENCE [MRNA]</scope>
    <scope>TISSUE SPECIFICITY</scope>
</reference>
<reference key="2">
    <citation type="submission" date="2005-09" db="EMBL/GenBank/DDBJ databases">
        <authorList>
            <person name="Mural R.J."/>
            <person name="Istrail S."/>
            <person name="Sutton G."/>
            <person name="Florea L."/>
            <person name="Halpern A.L."/>
            <person name="Mobarry C.M."/>
            <person name="Lippert R."/>
            <person name="Walenz B."/>
            <person name="Shatkay H."/>
            <person name="Dew I."/>
            <person name="Miller J.R."/>
            <person name="Flanigan M.J."/>
            <person name="Edwards N.J."/>
            <person name="Bolanos R."/>
            <person name="Fasulo D."/>
            <person name="Halldorsson B.V."/>
            <person name="Hannenhalli S."/>
            <person name="Turner R."/>
            <person name="Yooseph S."/>
            <person name="Lu F."/>
            <person name="Nusskern D.R."/>
            <person name="Shue B.C."/>
            <person name="Zheng X.H."/>
            <person name="Zhong F."/>
            <person name="Delcher A.L."/>
            <person name="Huson D.H."/>
            <person name="Kravitz S.A."/>
            <person name="Mouchard L."/>
            <person name="Reinert K."/>
            <person name="Remington K.A."/>
            <person name="Clark A.G."/>
            <person name="Waterman M.S."/>
            <person name="Eichler E.E."/>
            <person name="Adams M.D."/>
            <person name="Hunkapiller M.W."/>
            <person name="Myers E.W."/>
            <person name="Venter J.C."/>
        </authorList>
    </citation>
    <scope>NUCLEOTIDE SEQUENCE [LARGE SCALE GENOMIC DNA]</scope>
</reference>
<reference key="3">
    <citation type="journal article" date="2004" name="Genome Res.">
        <title>The status, quality, and expansion of the NIH full-length cDNA project: the Mammalian Gene Collection (MGC).</title>
        <authorList>
            <consortium name="The MGC Project Team"/>
        </authorList>
    </citation>
    <scope>NUCLEOTIDE SEQUENCE [LARGE SCALE MRNA]</scope>
    <source>
        <tissue>Muscle</tissue>
    </source>
</reference>
<reference key="4">
    <citation type="journal article" date="2004" name="Nat. Genet.">
        <title>Complete sequencing and characterization of 21,243 full-length human cDNAs.</title>
        <authorList>
            <person name="Ota T."/>
            <person name="Suzuki Y."/>
            <person name="Nishikawa T."/>
            <person name="Otsuki T."/>
            <person name="Sugiyama T."/>
            <person name="Irie R."/>
            <person name="Wakamatsu A."/>
            <person name="Hayashi K."/>
            <person name="Sato H."/>
            <person name="Nagai K."/>
            <person name="Kimura K."/>
            <person name="Makita H."/>
            <person name="Sekine M."/>
            <person name="Obayashi M."/>
            <person name="Nishi T."/>
            <person name="Shibahara T."/>
            <person name="Tanaka T."/>
            <person name="Ishii S."/>
            <person name="Yamamoto J."/>
            <person name="Saito K."/>
            <person name="Kawai Y."/>
            <person name="Isono Y."/>
            <person name="Nakamura Y."/>
            <person name="Nagahari K."/>
            <person name="Murakami K."/>
            <person name="Yasuda T."/>
            <person name="Iwayanagi T."/>
            <person name="Wagatsuma M."/>
            <person name="Shiratori A."/>
            <person name="Sudo H."/>
            <person name="Hosoiri T."/>
            <person name="Kaku Y."/>
            <person name="Kodaira H."/>
            <person name="Kondo H."/>
            <person name="Sugawara M."/>
            <person name="Takahashi M."/>
            <person name="Kanda K."/>
            <person name="Yokoi T."/>
            <person name="Furuya T."/>
            <person name="Kikkawa E."/>
            <person name="Omura Y."/>
            <person name="Abe K."/>
            <person name="Kamihara K."/>
            <person name="Katsuta N."/>
            <person name="Sato K."/>
            <person name="Tanikawa M."/>
            <person name="Yamazaki M."/>
            <person name="Ninomiya K."/>
            <person name="Ishibashi T."/>
            <person name="Yamashita H."/>
            <person name="Murakawa K."/>
            <person name="Fujimori K."/>
            <person name="Tanai H."/>
            <person name="Kimata M."/>
            <person name="Watanabe M."/>
            <person name="Hiraoka S."/>
            <person name="Chiba Y."/>
            <person name="Ishida S."/>
            <person name="Ono Y."/>
            <person name="Takiguchi S."/>
            <person name="Watanabe S."/>
            <person name="Yosida M."/>
            <person name="Hotuta T."/>
            <person name="Kusano J."/>
            <person name="Kanehori K."/>
            <person name="Takahashi-Fujii A."/>
            <person name="Hara H."/>
            <person name="Tanase T.-O."/>
            <person name="Nomura Y."/>
            <person name="Togiya S."/>
            <person name="Komai F."/>
            <person name="Hara R."/>
            <person name="Takeuchi K."/>
            <person name="Arita M."/>
            <person name="Imose N."/>
            <person name="Musashino K."/>
            <person name="Yuuki H."/>
            <person name="Oshima A."/>
            <person name="Sasaki N."/>
            <person name="Aotsuka S."/>
            <person name="Yoshikawa Y."/>
            <person name="Matsunawa H."/>
            <person name="Ichihara T."/>
            <person name="Shiohata N."/>
            <person name="Sano S."/>
            <person name="Moriya S."/>
            <person name="Momiyama H."/>
            <person name="Satoh N."/>
            <person name="Takami S."/>
            <person name="Terashima Y."/>
            <person name="Suzuki O."/>
            <person name="Nakagawa S."/>
            <person name="Senoh A."/>
            <person name="Mizoguchi H."/>
            <person name="Goto Y."/>
            <person name="Shimizu F."/>
            <person name="Wakebe H."/>
            <person name="Hishigaki H."/>
            <person name="Watanabe T."/>
            <person name="Sugiyama A."/>
            <person name="Takemoto M."/>
            <person name="Kawakami B."/>
            <person name="Yamazaki M."/>
            <person name="Watanabe K."/>
            <person name="Kumagai A."/>
            <person name="Itakura S."/>
            <person name="Fukuzumi Y."/>
            <person name="Fujimori Y."/>
            <person name="Komiyama M."/>
            <person name="Tashiro H."/>
            <person name="Tanigami A."/>
            <person name="Fujiwara T."/>
            <person name="Ono T."/>
            <person name="Yamada K."/>
            <person name="Fujii Y."/>
            <person name="Ozaki K."/>
            <person name="Hirao M."/>
            <person name="Ohmori Y."/>
            <person name="Kawabata A."/>
            <person name="Hikiji T."/>
            <person name="Kobatake N."/>
            <person name="Inagaki H."/>
            <person name="Ikema Y."/>
            <person name="Okamoto S."/>
            <person name="Okitani R."/>
            <person name="Kawakami T."/>
            <person name="Noguchi S."/>
            <person name="Itoh T."/>
            <person name="Shigeta K."/>
            <person name="Senba T."/>
            <person name="Matsumura K."/>
            <person name="Nakajima Y."/>
            <person name="Mizuno T."/>
            <person name="Morinaga M."/>
            <person name="Sasaki M."/>
            <person name="Togashi T."/>
            <person name="Oyama M."/>
            <person name="Hata H."/>
            <person name="Watanabe M."/>
            <person name="Komatsu T."/>
            <person name="Mizushima-Sugano J."/>
            <person name="Satoh T."/>
            <person name="Shirai Y."/>
            <person name="Takahashi Y."/>
            <person name="Nakagawa K."/>
            <person name="Okumura K."/>
            <person name="Nagase T."/>
            <person name="Nomura N."/>
            <person name="Kikuchi H."/>
            <person name="Masuho Y."/>
            <person name="Yamashita R."/>
            <person name="Nakai K."/>
            <person name="Yada T."/>
            <person name="Nakamura Y."/>
            <person name="Ohara O."/>
            <person name="Isogai T."/>
            <person name="Sugano S."/>
        </authorList>
    </citation>
    <scope>NUCLEOTIDE SEQUENCE [LARGE SCALE MRNA] OF 1-204</scope>
    <source>
        <tissue>Neuroblastoma</tissue>
    </source>
</reference>
<reference key="5">
    <citation type="journal article" date="2011" name="BMC Syst. Biol.">
        <title>Initial characterization of the human central proteome.</title>
        <authorList>
            <person name="Burkard T.R."/>
            <person name="Planyavsky M."/>
            <person name="Kaupe I."/>
            <person name="Breitwieser F.P."/>
            <person name="Buerckstuemmer T."/>
            <person name="Bennett K.L."/>
            <person name="Superti-Furga G."/>
            <person name="Colinge J."/>
        </authorList>
    </citation>
    <scope>IDENTIFICATION BY MASS SPECTROMETRY [LARGE SCALE ANALYSIS]</scope>
</reference>
<reference key="6">
    <citation type="journal article" date="2012" name="Proc. Natl. Acad. Sci. U.S.A.">
        <title>N-terminal acetylome analyses and functional insights of the N-terminal acetyltransferase NatB.</title>
        <authorList>
            <person name="Van Damme P."/>
            <person name="Lasa M."/>
            <person name="Polevoda B."/>
            <person name="Gazquez C."/>
            <person name="Elosegui-Artola A."/>
            <person name="Kim D.S."/>
            <person name="De Juan-Pardo E."/>
            <person name="Demeyer K."/>
            <person name="Hole K."/>
            <person name="Larrea E."/>
            <person name="Timmerman E."/>
            <person name="Prieto J."/>
            <person name="Arnesen T."/>
            <person name="Sherman F."/>
            <person name="Gevaert K."/>
            <person name="Aldabe R."/>
        </authorList>
    </citation>
    <scope>ACETYLATION [LARGE SCALE ANALYSIS] AT MET-1</scope>
    <scope>IDENTIFICATION BY MASS SPECTROMETRY [LARGE SCALE ANALYSIS]</scope>
</reference>
<reference key="7">
    <citation type="journal article" date="2015" name="Proteomics">
        <title>N-terminome analysis of the human mitochondrial proteome.</title>
        <authorList>
            <person name="Vaca Jacome A.S."/>
            <person name="Rabilloud T."/>
            <person name="Schaeffer-Reiss C."/>
            <person name="Rompais M."/>
            <person name="Ayoub D."/>
            <person name="Lane L."/>
            <person name="Bairoch A."/>
            <person name="Van Dorsselaer A."/>
            <person name="Carapito C."/>
        </authorList>
    </citation>
    <scope>IDENTIFICATION BY MASS SPECTROMETRY [LARGE SCALE ANALYSIS]</scope>
</reference>
<reference key="8">
    <citation type="journal article" date="2018" name="Science">
        <title>SFXN1 is a mitochondrial serine transporter required for one-carbon metabolism.</title>
        <authorList>
            <person name="Kory N."/>
            <person name="Wyant G.A."/>
            <person name="Prakash G."/>
            <person name="Uit de Bos J."/>
            <person name="Bottanelli F."/>
            <person name="Pacold M.E."/>
            <person name="Chan S.H."/>
            <person name="Lewis C.A."/>
            <person name="Wang T."/>
            <person name="Keys H.R."/>
            <person name="Guo Y.E."/>
            <person name="Sabatini D.M."/>
        </authorList>
    </citation>
    <scope>FUNCTION</scope>
    <scope>SUBCELLULAR LOCATION</scope>
</reference>
<reference key="9">
    <citation type="journal article" date="2019" name="J. Physiol. Sci.">
        <title>Regulation of mitochondrial iron homeostasis by sideroflexin 2.</title>
        <authorList>
            <person name="Mon E.E."/>
            <person name="Wei F.Y."/>
            <person name="Ahmad R.N.R."/>
            <person name="Yamamoto T."/>
            <person name="Moroishi T."/>
            <person name="Tomizawa K."/>
        </authorList>
    </citation>
    <scope>SUBCELLULAR LOCATION</scope>
    <scope>FUNCTION</scope>
</reference>
<accession>Q96NB2</accession>
<accession>Q5JSM6</accession>
<name>SFXN2_HUMAN</name>
<proteinExistence type="evidence at protein level"/>